<feature type="chain" id="PRO_1000091092" description="UDP-N-acetylmuramate--L-alanine ligase">
    <location>
        <begin position="1"/>
        <end position="458"/>
    </location>
</feature>
<feature type="binding site" evidence="1">
    <location>
        <begin position="118"/>
        <end position="124"/>
    </location>
    <ligand>
        <name>ATP</name>
        <dbReference type="ChEBI" id="CHEBI:30616"/>
    </ligand>
</feature>
<accession>B1KTF0</accession>
<name>MURC_CLOBM</name>
<organism>
    <name type="scientific">Clostridium botulinum (strain Loch Maree / Type A3)</name>
    <dbReference type="NCBI Taxonomy" id="498214"/>
    <lineage>
        <taxon>Bacteria</taxon>
        <taxon>Bacillati</taxon>
        <taxon>Bacillota</taxon>
        <taxon>Clostridia</taxon>
        <taxon>Eubacteriales</taxon>
        <taxon>Clostridiaceae</taxon>
        <taxon>Clostridium</taxon>
    </lineage>
</organism>
<evidence type="ECO:0000255" key="1">
    <source>
        <dbReference type="HAMAP-Rule" id="MF_00046"/>
    </source>
</evidence>
<comment type="function">
    <text evidence="1">Cell wall formation.</text>
</comment>
<comment type="catalytic activity">
    <reaction evidence="1">
        <text>UDP-N-acetyl-alpha-D-muramate + L-alanine + ATP = UDP-N-acetyl-alpha-D-muramoyl-L-alanine + ADP + phosphate + H(+)</text>
        <dbReference type="Rhea" id="RHEA:23372"/>
        <dbReference type="ChEBI" id="CHEBI:15378"/>
        <dbReference type="ChEBI" id="CHEBI:30616"/>
        <dbReference type="ChEBI" id="CHEBI:43474"/>
        <dbReference type="ChEBI" id="CHEBI:57972"/>
        <dbReference type="ChEBI" id="CHEBI:70757"/>
        <dbReference type="ChEBI" id="CHEBI:83898"/>
        <dbReference type="ChEBI" id="CHEBI:456216"/>
        <dbReference type="EC" id="6.3.2.8"/>
    </reaction>
</comment>
<comment type="pathway">
    <text evidence="1">Cell wall biogenesis; peptidoglycan biosynthesis.</text>
</comment>
<comment type="subcellular location">
    <subcellularLocation>
        <location evidence="1">Cytoplasm</location>
    </subcellularLocation>
</comment>
<comment type="similarity">
    <text evidence="1">Belongs to the MurCDEF family.</text>
</comment>
<keyword id="KW-0067">ATP-binding</keyword>
<keyword id="KW-0131">Cell cycle</keyword>
<keyword id="KW-0132">Cell division</keyword>
<keyword id="KW-0133">Cell shape</keyword>
<keyword id="KW-0961">Cell wall biogenesis/degradation</keyword>
<keyword id="KW-0963">Cytoplasm</keyword>
<keyword id="KW-0436">Ligase</keyword>
<keyword id="KW-0547">Nucleotide-binding</keyword>
<keyword id="KW-0573">Peptidoglycan synthesis</keyword>
<dbReference type="EC" id="6.3.2.8" evidence="1"/>
<dbReference type="EMBL" id="CP000962">
    <property type="protein sequence ID" value="ACA55639.1"/>
    <property type="molecule type" value="Genomic_DNA"/>
</dbReference>
<dbReference type="RefSeq" id="WP_012343598.1">
    <property type="nucleotide sequence ID" value="NC_010520.1"/>
</dbReference>
<dbReference type="SMR" id="B1KTF0"/>
<dbReference type="KEGG" id="cbl:CLK_3017"/>
<dbReference type="HOGENOM" id="CLU_028104_1_0_9"/>
<dbReference type="UniPathway" id="UPA00219"/>
<dbReference type="GO" id="GO:0005737">
    <property type="term" value="C:cytoplasm"/>
    <property type="evidence" value="ECO:0007669"/>
    <property type="project" value="UniProtKB-SubCell"/>
</dbReference>
<dbReference type="GO" id="GO:0005524">
    <property type="term" value="F:ATP binding"/>
    <property type="evidence" value="ECO:0007669"/>
    <property type="project" value="UniProtKB-UniRule"/>
</dbReference>
<dbReference type="GO" id="GO:0008763">
    <property type="term" value="F:UDP-N-acetylmuramate-L-alanine ligase activity"/>
    <property type="evidence" value="ECO:0007669"/>
    <property type="project" value="UniProtKB-UniRule"/>
</dbReference>
<dbReference type="GO" id="GO:0051301">
    <property type="term" value="P:cell division"/>
    <property type="evidence" value="ECO:0007669"/>
    <property type="project" value="UniProtKB-KW"/>
</dbReference>
<dbReference type="GO" id="GO:0071555">
    <property type="term" value="P:cell wall organization"/>
    <property type="evidence" value="ECO:0007669"/>
    <property type="project" value="UniProtKB-KW"/>
</dbReference>
<dbReference type="GO" id="GO:0009252">
    <property type="term" value="P:peptidoglycan biosynthetic process"/>
    <property type="evidence" value="ECO:0007669"/>
    <property type="project" value="UniProtKB-UniRule"/>
</dbReference>
<dbReference type="GO" id="GO:0008360">
    <property type="term" value="P:regulation of cell shape"/>
    <property type="evidence" value="ECO:0007669"/>
    <property type="project" value="UniProtKB-KW"/>
</dbReference>
<dbReference type="Gene3D" id="3.90.190.20">
    <property type="entry name" value="Mur ligase, C-terminal domain"/>
    <property type="match status" value="1"/>
</dbReference>
<dbReference type="Gene3D" id="3.40.1190.10">
    <property type="entry name" value="Mur-like, catalytic domain"/>
    <property type="match status" value="1"/>
</dbReference>
<dbReference type="Gene3D" id="3.40.50.720">
    <property type="entry name" value="NAD(P)-binding Rossmann-like Domain"/>
    <property type="match status" value="1"/>
</dbReference>
<dbReference type="HAMAP" id="MF_00046">
    <property type="entry name" value="MurC"/>
    <property type="match status" value="1"/>
</dbReference>
<dbReference type="InterPro" id="IPR036565">
    <property type="entry name" value="Mur-like_cat_sf"/>
</dbReference>
<dbReference type="InterPro" id="IPR004101">
    <property type="entry name" value="Mur_ligase_C"/>
</dbReference>
<dbReference type="InterPro" id="IPR036615">
    <property type="entry name" value="Mur_ligase_C_dom_sf"/>
</dbReference>
<dbReference type="InterPro" id="IPR013221">
    <property type="entry name" value="Mur_ligase_cen"/>
</dbReference>
<dbReference type="InterPro" id="IPR000713">
    <property type="entry name" value="Mur_ligase_N"/>
</dbReference>
<dbReference type="InterPro" id="IPR050061">
    <property type="entry name" value="MurCDEF_pg_biosynth"/>
</dbReference>
<dbReference type="InterPro" id="IPR005758">
    <property type="entry name" value="UDP-N-AcMur_Ala_ligase_MurC"/>
</dbReference>
<dbReference type="NCBIfam" id="TIGR01082">
    <property type="entry name" value="murC"/>
    <property type="match status" value="1"/>
</dbReference>
<dbReference type="PANTHER" id="PTHR43445:SF3">
    <property type="entry name" value="UDP-N-ACETYLMURAMATE--L-ALANINE LIGASE"/>
    <property type="match status" value="1"/>
</dbReference>
<dbReference type="PANTHER" id="PTHR43445">
    <property type="entry name" value="UDP-N-ACETYLMURAMATE--L-ALANINE LIGASE-RELATED"/>
    <property type="match status" value="1"/>
</dbReference>
<dbReference type="Pfam" id="PF01225">
    <property type="entry name" value="Mur_ligase"/>
    <property type="match status" value="1"/>
</dbReference>
<dbReference type="Pfam" id="PF02875">
    <property type="entry name" value="Mur_ligase_C"/>
    <property type="match status" value="1"/>
</dbReference>
<dbReference type="Pfam" id="PF08245">
    <property type="entry name" value="Mur_ligase_M"/>
    <property type="match status" value="1"/>
</dbReference>
<dbReference type="SUPFAM" id="SSF51984">
    <property type="entry name" value="MurCD N-terminal domain"/>
    <property type="match status" value="1"/>
</dbReference>
<dbReference type="SUPFAM" id="SSF53623">
    <property type="entry name" value="MurD-like peptide ligases, catalytic domain"/>
    <property type="match status" value="1"/>
</dbReference>
<dbReference type="SUPFAM" id="SSF53244">
    <property type="entry name" value="MurD-like peptide ligases, peptide-binding domain"/>
    <property type="match status" value="1"/>
</dbReference>
<proteinExistence type="inferred from homology"/>
<protein>
    <recommendedName>
        <fullName evidence="1">UDP-N-acetylmuramate--L-alanine ligase</fullName>
        <ecNumber evidence="1">6.3.2.8</ecNumber>
    </recommendedName>
    <alternativeName>
        <fullName evidence="1">UDP-N-acetylmuramoyl-L-alanine synthetase</fullName>
    </alternativeName>
</protein>
<sequence>MSFDFIKDKNKHIHFIGIGGISMSGLAEILLYNNFSISGSDMNSSPITEKLKDKGAKIYIGHKKENVKDADLIVYTAAIASDNPEIIEAKEKNIKLMDRADFLGNLMKGYKYNIAISGTHGKTTTTSMLSHVALKANVDPTILVGGNLDIINGNVRVGESDFFITEACEYKSSFLKFFPYIGVILNIDADHLDYYKDLDDIKNAFSKFIKLIPKDGYLVAYGEDKNIQSIIKEANCNVITYGINSGDIQAHNIEYDEKACGNFDVFKDNQKLFSVKLNVPGKHNILNSLASICIGLASDMKDKDIIEGIESFFGTHRRFELKGCKNNITVIDDYAHHPTEISATLDAAKKYPHNKMFCVFQPHTYSRTLTLFDDFTKCFDNADEIILADIYAAREKDTGIINSNMLGDKLRERGLKCTNFHKFDDIKNYLIENAKDGDLILTIGAGDIYKVGEMYINL</sequence>
<reference key="1">
    <citation type="journal article" date="2007" name="PLoS ONE">
        <title>Analysis of the neurotoxin complex genes in Clostridium botulinum A1-A4 and B1 strains: BoNT/A3, /Ba4 and /B1 clusters are located within plasmids.</title>
        <authorList>
            <person name="Smith T.J."/>
            <person name="Hill K.K."/>
            <person name="Foley B.T."/>
            <person name="Detter J.C."/>
            <person name="Munk A.C."/>
            <person name="Bruce D.C."/>
            <person name="Doggett N.A."/>
            <person name="Smith L.A."/>
            <person name="Marks J.D."/>
            <person name="Xie G."/>
            <person name="Brettin T.S."/>
        </authorList>
    </citation>
    <scope>NUCLEOTIDE SEQUENCE [LARGE SCALE GENOMIC DNA]</scope>
    <source>
        <strain>Loch Maree / Type A3</strain>
    </source>
</reference>
<gene>
    <name evidence="1" type="primary">murC</name>
    <name type="ordered locus">CLK_3017</name>
</gene>